<accession>A6V082</accession>
<evidence type="ECO:0000255" key="1">
    <source>
        <dbReference type="HAMAP-Rule" id="MF_00601"/>
    </source>
</evidence>
<protein>
    <recommendedName>
        <fullName evidence="1">Ethanolamine ammonia-lyase small subunit</fullName>
        <shortName evidence="1">EAL small subunit</shortName>
        <ecNumber evidence="1">4.3.1.7</ecNumber>
    </recommendedName>
</protein>
<sequence length="273" mass="30202">MNDKHLPDASAENPWLPLRQLTPARIALGRTGTSLPTRPQLDFQYAHAQARDAVHLPFDHASIGDGLRQRGRDSLLLHSAAADRHVYLQRPDLGRRLDEASVRRLREHAAGYDGQIDLAIVVADGLSALAVQRHTLPFLERLEEQALAEGWSLSPVVLVEQGRVAVADEIGELLRARMSVILIGERPGLSSPDSLGLYFTWAPRVGLTDAYRNCISNVRLEGLSYGMAAHRLLYLMREACRRQLSGVNLKDEAEVQSLEGDAPRTGNFLLARD</sequence>
<comment type="function">
    <text evidence="1">Catalyzes the deamination of various vicinal amino-alcohols to oxo compounds. Allows this organism to utilize ethanolamine as the sole source of nitrogen and carbon in the presence of external vitamin B12.</text>
</comment>
<comment type="catalytic activity">
    <reaction evidence="1">
        <text>ethanolamine = acetaldehyde + NH4(+)</text>
        <dbReference type="Rhea" id="RHEA:15313"/>
        <dbReference type="ChEBI" id="CHEBI:15343"/>
        <dbReference type="ChEBI" id="CHEBI:28938"/>
        <dbReference type="ChEBI" id="CHEBI:57603"/>
        <dbReference type="EC" id="4.3.1.7"/>
    </reaction>
</comment>
<comment type="cofactor">
    <cofactor evidence="1">
        <name>adenosylcob(III)alamin</name>
        <dbReference type="ChEBI" id="CHEBI:18408"/>
    </cofactor>
    <text evidence="1">Binds between the large and small subunits.</text>
</comment>
<comment type="pathway">
    <text evidence="1">Amine and polyamine degradation; ethanolamine degradation.</text>
</comment>
<comment type="subunit">
    <text evidence="1">The basic unit is a heterodimer which dimerizes to form tetramers. The heterotetramers trimerize; 6 large subunits form a core ring with 6 small subunits projecting outwards.</text>
</comment>
<comment type="subcellular location">
    <subcellularLocation>
        <location evidence="1">Bacterial microcompartment</location>
    </subcellularLocation>
</comment>
<comment type="similarity">
    <text evidence="1">Belongs to the EutC family.</text>
</comment>
<name>EUTC_PSEP7</name>
<keyword id="KW-1283">Bacterial microcompartment</keyword>
<keyword id="KW-0846">Cobalamin</keyword>
<keyword id="KW-0170">Cobalt</keyword>
<keyword id="KW-0456">Lyase</keyword>
<organism>
    <name type="scientific">Pseudomonas paraeruginosa (strain DSM 24068 / PA7)</name>
    <name type="common">Pseudomonas aeruginosa (strain PA7)</name>
    <dbReference type="NCBI Taxonomy" id="381754"/>
    <lineage>
        <taxon>Bacteria</taxon>
        <taxon>Pseudomonadati</taxon>
        <taxon>Pseudomonadota</taxon>
        <taxon>Gammaproteobacteria</taxon>
        <taxon>Pseudomonadales</taxon>
        <taxon>Pseudomonadaceae</taxon>
        <taxon>Pseudomonas</taxon>
        <taxon>Pseudomonas paraeruginosa</taxon>
    </lineage>
</organism>
<dbReference type="EC" id="4.3.1.7" evidence="1"/>
<dbReference type="EMBL" id="CP000744">
    <property type="protein sequence ID" value="ABR84887.1"/>
    <property type="molecule type" value="Genomic_DNA"/>
</dbReference>
<dbReference type="RefSeq" id="WP_012074407.1">
    <property type="nucleotide sequence ID" value="NC_009656.1"/>
</dbReference>
<dbReference type="SMR" id="A6V082"/>
<dbReference type="KEGG" id="pap:PSPA7_1081"/>
<dbReference type="HOGENOM" id="CLU_068224_1_0_6"/>
<dbReference type="UniPathway" id="UPA00560"/>
<dbReference type="Proteomes" id="UP000001582">
    <property type="component" value="Chromosome"/>
</dbReference>
<dbReference type="GO" id="GO:0009350">
    <property type="term" value="C:ethanolamine ammonia-lyase complex"/>
    <property type="evidence" value="ECO:0007669"/>
    <property type="project" value="UniProtKB-UniRule"/>
</dbReference>
<dbReference type="GO" id="GO:0031471">
    <property type="term" value="C:ethanolamine degradation polyhedral organelle"/>
    <property type="evidence" value="ECO:0007669"/>
    <property type="project" value="UniProtKB-UniRule"/>
</dbReference>
<dbReference type="GO" id="GO:0031419">
    <property type="term" value="F:cobalamin binding"/>
    <property type="evidence" value="ECO:0007669"/>
    <property type="project" value="UniProtKB-UniRule"/>
</dbReference>
<dbReference type="GO" id="GO:0008851">
    <property type="term" value="F:ethanolamine ammonia-lyase activity"/>
    <property type="evidence" value="ECO:0007669"/>
    <property type="project" value="UniProtKB-UniRule"/>
</dbReference>
<dbReference type="GO" id="GO:0006520">
    <property type="term" value="P:amino acid metabolic process"/>
    <property type="evidence" value="ECO:0007669"/>
    <property type="project" value="InterPro"/>
</dbReference>
<dbReference type="GO" id="GO:0046336">
    <property type="term" value="P:ethanolamine catabolic process"/>
    <property type="evidence" value="ECO:0007669"/>
    <property type="project" value="UniProtKB-UniRule"/>
</dbReference>
<dbReference type="FunFam" id="1.10.30.40:FF:000001">
    <property type="entry name" value="Ethanolamine ammonia-lyase light chain"/>
    <property type="match status" value="1"/>
</dbReference>
<dbReference type="FunFam" id="3.40.50.11240:FF:000001">
    <property type="entry name" value="Ethanolamine ammonia-lyase light chain"/>
    <property type="match status" value="1"/>
</dbReference>
<dbReference type="Gene3D" id="3.40.50.11240">
    <property type="entry name" value="Ethanolamine ammonia-lyase light chain (EutC)"/>
    <property type="match status" value="1"/>
</dbReference>
<dbReference type="Gene3D" id="1.10.30.40">
    <property type="entry name" value="Ethanolamine ammonia-lyase light chain (EutC), N-terminal domain"/>
    <property type="match status" value="1"/>
</dbReference>
<dbReference type="HAMAP" id="MF_00601">
    <property type="entry name" value="EutC"/>
    <property type="match status" value="1"/>
</dbReference>
<dbReference type="InterPro" id="IPR009246">
    <property type="entry name" value="EutC"/>
</dbReference>
<dbReference type="InterPro" id="IPR042251">
    <property type="entry name" value="EutC_C"/>
</dbReference>
<dbReference type="InterPro" id="IPR042255">
    <property type="entry name" value="EutC_N"/>
</dbReference>
<dbReference type="NCBIfam" id="NF003971">
    <property type="entry name" value="PRK05465.1"/>
    <property type="match status" value="1"/>
</dbReference>
<dbReference type="PANTHER" id="PTHR39330">
    <property type="entry name" value="ETHANOLAMINE AMMONIA-LYASE LIGHT CHAIN"/>
    <property type="match status" value="1"/>
</dbReference>
<dbReference type="PANTHER" id="PTHR39330:SF1">
    <property type="entry name" value="ETHANOLAMINE AMMONIA-LYASE SMALL SUBUNIT"/>
    <property type="match status" value="1"/>
</dbReference>
<dbReference type="Pfam" id="PF05985">
    <property type="entry name" value="EutC"/>
    <property type="match status" value="1"/>
</dbReference>
<dbReference type="PIRSF" id="PIRSF018982">
    <property type="entry name" value="EutC"/>
    <property type="match status" value="1"/>
</dbReference>
<reference key="1">
    <citation type="submission" date="2007-06" db="EMBL/GenBank/DDBJ databases">
        <authorList>
            <person name="Dodson R.J."/>
            <person name="Harkins D."/>
            <person name="Paulsen I.T."/>
        </authorList>
    </citation>
    <scope>NUCLEOTIDE SEQUENCE [LARGE SCALE GENOMIC DNA]</scope>
    <source>
        <strain>DSM 24068 / PA7</strain>
    </source>
</reference>
<gene>
    <name evidence="1" type="primary">eutC</name>
    <name type="ordered locus">PSPA7_1081</name>
</gene>
<feature type="chain" id="PRO_1000025857" description="Ethanolamine ammonia-lyase small subunit">
    <location>
        <begin position="1"/>
        <end position="273"/>
    </location>
</feature>
<feature type="binding site" evidence="1">
    <location>
        <position position="164"/>
    </location>
    <ligand>
        <name>adenosylcob(III)alamin</name>
        <dbReference type="ChEBI" id="CHEBI:18408"/>
    </ligand>
</feature>
<feature type="binding site" evidence="1">
    <location>
        <position position="185"/>
    </location>
    <ligand>
        <name>adenosylcob(III)alamin</name>
        <dbReference type="ChEBI" id="CHEBI:18408"/>
    </ligand>
</feature>
<feature type="binding site" evidence="1">
    <location>
        <position position="214"/>
    </location>
    <ligand>
        <name>adenosylcob(III)alamin</name>
        <dbReference type="ChEBI" id="CHEBI:18408"/>
    </ligand>
</feature>
<proteinExistence type="inferred from homology"/>